<reference key="1">
    <citation type="journal article" date="2004" name="Proc. Natl. Acad. Sci. U.S.A.">
        <title>The louse-borne human pathogen Bartonella quintana is a genomic derivative of the zoonotic agent Bartonella henselae.</title>
        <authorList>
            <person name="Alsmark U.C.M."/>
            <person name="Frank A.C."/>
            <person name="Karlberg E.O."/>
            <person name="Legault B.-A."/>
            <person name="Ardell D.H."/>
            <person name="Canbaeck B."/>
            <person name="Eriksson A.-S."/>
            <person name="Naeslund A.K."/>
            <person name="Handley S.A."/>
            <person name="Huvet M."/>
            <person name="La Scola B."/>
            <person name="Holmberg M."/>
            <person name="Andersson S.G.E."/>
        </authorList>
    </citation>
    <scope>NUCLEOTIDE SEQUENCE [LARGE SCALE GENOMIC DNA]</scope>
    <source>
        <strain>Toulouse</strain>
    </source>
</reference>
<keyword id="KW-0687">Ribonucleoprotein</keyword>
<keyword id="KW-0689">Ribosomal protein</keyword>
<keyword id="KW-0694">RNA-binding</keyword>
<keyword id="KW-0699">rRNA-binding</keyword>
<proteinExistence type="inferred from homology"/>
<dbReference type="EMBL" id="BX897700">
    <property type="protein sequence ID" value="CAF26300.1"/>
    <property type="molecule type" value="Genomic_DNA"/>
</dbReference>
<dbReference type="RefSeq" id="WP_011179546.1">
    <property type="nucleotide sequence ID" value="NC_005955.1"/>
</dbReference>
<dbReference type="SMR" id="Q6FZC8"/>
<dbReference type="GeneID" id="56532827"/>
<dbReference type="KEGG" id="bqu:BQ08170"/>
<dbReference type="eggNOG" id="COG0092">
    <property type="taxonomic scope" value="Bacteria"/>
</dbReference>
<dbReference type="HOGENOM" id="CLU_058591_0_2_5"/>
<dbReference type="OrthoDB" id="9806396at2"/>
<dbReference type="Proteomes" id="UP000000597">
    <property type="component" value="Chromosome"/>
</dbReference>
<dbReference type="GO" id="GO:0022627">
    <property type="term" value="C:cytosolic small ribosomal subunit"/>
    <property type="evidence" value="ECO:0007669"/>
    <property type="project" value="TreeGrafter"/>
</dbReference>
<dbReference type="GO" id="GO:0003729">
    <property type="term" value="F:mRNA binding"/>
    <property type="evidence" value="ECO:0007669"/>
    <property type="project" value="UniProtKB-UniRule"/>
</dbReference>
<dbReference type="GO" id="GO:0019843">
    <property type="term" value="F:rRNA binding"/>
    <property type="evidence" value="ECO:0007669"/>
    <property type="project" value="UniProtKB-UniRule"/>
</dbReference>
<dbReference type="GO" id="GO:0003735">
    <property type="term" value="F:structural constituent of ribosome"/>
    <property type="evidence" value="ECO:0007669"/>
    <property type="project" value="InterPro"/>
</dbReference>
<dbReference type="GO" id="GO:0006412">
    <property type="term" value="P:translation"/>
    <property type="evidence" value="ECO:0007669"/>
    <property type="project" value="UniProtKB-UniRule"/>
</dbReference>
<dbReference type="CDD" id="cd02412">
    <property type="entry name" value="KH-II_30S_S3"/>
    <property type="match status" value="1"/>
</dbReference>
<dbReference type="FunFam" id="3.30.1140.32:FF:000002">
    <property type="entry name" value="30S ribosomal protein S3"/>
    <property type="match status" value="1"/>
</dbReference>
<dbReference type="FunFam" id="3.30.300.20:FF:000001">
    <property type="entry name" value="30S ribosomal protein S3"/>
    <property type="match status" value="1"/>
</dbReference>
<dbReference type="Gene3D" id="3.30.300.20">
    <property type="match status" value="1"/>
</dbReference>
<dbReference type="Gene3D" id="3.30.1140.32">
    <property type="entry name" value="Ribosomal protein S3, C-terminal domain"/>
    <property type="match status" value="1"/>
</dbReference>
<dbReference type="HAMAP" id="MF_01309_B">
    <property type="entry name" value="Ribosomal_uS3_B"/>
    <property type="match status" value="1"/>
</dbReference>
<dbReference type="InterPro" id="IPR004087">
    <property type="entry name" value="KH_dom"/>
</dbReference>
<dbReference type="InterPro" id="IPR015946">
    <property type="entry name" value="KH_dom-like_a/b"/>
</dbReference>
<dbReference type="InterPro" id="IPR004044">
    <property type="entry name" value="KH_dom_type_2"/>
</dbReference>
<dbReference type="InterPro" id="IPR009019">
    <property type="entry name" value="KH_sf_prok-type"/>
</dbReference>
<dbReference type="InterPro" id="IPR036419">
    <property type="entry name" value="Ribosomal_S3_C_sf"/>
</dbReference>
<dbReference type="InterPro" id="IPR005704">
    <property type="entry name" value="Ribosomal_uS3_bac-typ"/>
</dbReference>
<dbReference type="InterPro" id="IPR001351">
    <property type="entry name" value="Ribosomal_uS3_C"/>
</dbReference>
<dbReference type="InterPro" id="IPR018280">
    <property type="entry name" value="Ribosomal_uS3_CS"/>
</dbReference>
<dbReference type="NCBIfam" id="TIGR01009">
    <property type="entry name" value="rpsC_bact"/>
    <property type="match status" value="1"/>
</dbReference>
<dbReference type="PANTHER" id="PTHR11760">
    <property type="entry name" value="30S/40S RIBOSOMAL PROTEIN S3"/>
    <property type="match status" value="1"/>
</dbReference>
<dbReference type="PANTHER" id="PTHR11760:SF19">
    <property type="entry name" value="SMALL RIBOSOMAL SUBUNIT PROTEIN US3C"/>
    <property type="match status" value="1"/>
</dbReference>
<dbReference type="Pfam" id="PF07650">
    <property type="entry name" value="KH_2"/>
    <property type="match status" value="1"/>
</dbReference>
<dbReference type="Pfam" id="PF00189">
    <property type="entry name" value="Ribosomal_S3_C"/>
    <property type="match status" value="1"/>
</dbReference>
<dbReference type="SMART" id="SM00322">
    <property type="entry name" value="KH"/>
    <property type="match status" value="1"/>
</dbReference>
<dbReference type="SUPFAM" id="SSF54814">
    <property type="entry name" value="Prokaryotic type KH domain (KH-domain type II)"/>
    <property type="match status" value="1"/>
</dbReference>
<dbReference type="SUPFAM" id="SSF54821">
    <property type="entry name" value="Ribosomal protein S3 C-terminal domain"/>
    <property type="match status" value="1"/>
</dbReference>
<dbReference type="PROSITE" id="PS50823">
    <property type="entry name" value="KH_TYPE_2"/>
    <property type="match status" value="1"/>
</dbReference>
<dbReference type="PROSITE" id="PS00548">
    <property type="entry name" value="RIBOSOMAL_S3"/>
    <property type="match status" value="1"/>
</dbReference>
<accession>Q6FZC8</accession>
<gene>
    <name evidence="1" type="primary">rpsC</name>
    <name type="ordered locus">BQ08170</name>
</gene>
<comment type="function">
    <text evidence="1">Binds the lower part of the 30S subunit head. Binds mRNA in the 70S ribosome, positioning it for translation.</text>
</comment>
<comment type="subunit">
    <text evidence="1">Part of the 30S ribosomal subunit. Forms a tight complex with proteins S10 and S14.</text>
</comment>
<comment type="similarity">
    <text evidence="1">Belongs to the universal ribosomal protein uS3 family.</text>
</comment>
<name>RS3_BARQU</name>
<evidence type="ECO:0000255" key="1">
    <source>
        <dbReference type="HAMAP-Rule" id="MF_01309"/>
    </source>
</evidence>
<evidence type="ECO:0000305" key="2"/>
<feature type="chain" id="PRO_0000130076" description="Small ribosomal subunit protein uS3">
    <location>
        <begin position="1"/>
        <end position="236"/>
    </location>
</feature>
<feature type="domain" description="KH type-2" evidence="1">
    <location>
        <begin position="39"/>
        <end position="107"/>
    </location>
</feature>
<sequence length="236" mass="26717">MGQKINPIGLRLGVNRTWDSRWYADSGEYGRLLHEDLSIRLYVLEELKQAAISKVIIERPHKKCRVTIYSARPGLIIGKKGADIEKLRRKLSEMTNAETSLNIVEIHKPEIDATIIAQSIAQQLERRVAFRRAMKRAVQSAMRLGAEGIRINCSGRLGGAEIARMEWYREGRVPLHTLRSDVDYGTAEAKTAYGICGVKVWVFKGEILEYDPIASERRSVEIDHSGSSSNRRRENA</sequence>
<organism>
    <name type="scientific">Bartonella quintana (strain Toulouse)</name>
    <name type="common">Rochalimaea quintana</name>
    <dbReference type="NCBI Taxonomy" id="283165"/>
    <lineage>
        <taxon>Bacteria</taxon>
        <taxon>Pseudomonadati</taxon>
        <taxon>Pseudomonadota</taxon>
        <taxon>Alphaproteobacteria</taxon>
        <taxon>Hyphomicrobiales</taxon>
        <taxon>Bartonellaceae</taxon>
        <taxon>Bartonella</taxon>
    </lineage>
</organism>
<protein>
    <recommendedName>
        <fullName evidence="1">Small ribosomal subunit protein uS3</fullName>
    </recommendedName>
    <alternativeName>
        <fullName evidence="2">30S ribosomal protein S3</fullName>
    </alternativeName>
</protein>